<protein>
    <recommendedName>
        <fullName evidence="1">Sec-independent protein translocase protein TatA</fullName>
    </recommendedName>
</protein>
<gene>
    <name evidence="1" type="primary">tatA</name>
    <name type="ordered locus">Rru_A1773</name>
</gene>
<dbReference type="EMBL" id="CP000230">
    <property type="protein sequence ID" value="ABC22573.1"/>
    <property type="molecule type" value="Genomic_DNA"/>
</dbReference>
<dbReference type="RefSeq" id="WP_011389526.1">
    <property type="nucleotide sequence ID" value="NC_007643.1"/>
</dbReference>
<dbReference type="RefSeq" id="YP_426860.1">
    <property type="nucleotide sequence ID" value="NC_007643.1"/>
</dbReference>
<dbReference type="SMR" id="Q2RTH2"/>
<dbReference type="STRING" id="269796.Rru_A1773"/>
<dbReference type="EnsemblBacteria" id="ABC22573">
    <property type="protein sequence ID" value="ABC22573"/>
    <property type="gene ID" value="Rru_A1773"/>
</dbReference>
<dbReference type="KEGG" id="rru:Rru_A1773"/>
<dbReference type="PATRIC" id="fig|269796.9.peg.1851"/>
<dbReference type="eggNOG" id="COG1826">
    <property type="taxonomic scope" value="Bacteria"/>
</dbReference>
<dbReference type="HOGENOM" id="CLU_086034_5_4_5"/>
<dbReference type="Proteomes" id="UP000001929">
    <property type="component" value="Chromosome"/>
</dbReference>
<dbReference type="GO" id="GO:0033281">
    <property type="term" value="C:TAT protein transport complex"/>
    <property type="evidence" value="ECO:0007669"/>
    <property type="project" value="UniProtKB-UniRule"/>
</dbReference>
<dbReference type="GO" id="GO:0008320">
    <property type="term" value="F:protein transmembrane transporter activity"/>
    <property type="evidence" value="ECO:0007669"/>
    <property type="project" value="UniProtKB-UniRule"/>
</dbReference>
<dbReference type="GO" id="GO:0043953">
    <property type="term" value="P:protein transport by the Tat complex"/>
    <property type="evidence" value="ECO:0007669"/>
    <property type="project" value="UniProtKB-UniRule"/>
</dbReference>
<dbReference type="Gene3D" id="1.20.5.3310">
    <property type="match status" value="1"/>
</dbReference>
<dbReference type="HAMAP" id="MF_00236">
    <property type="entry name" value="TatA_E"/>
    <property type="match status" value="1"/>
</dbReference>
<dbReference type="InterPro" id="IPR003369">
    <property type="entry name" value="TatA/B/E"/>
</dbReference>
<dbReference type="InterPro" id="IPR006312">
    <property type="entry name" value="TatA/E"/>
</dbReference>
<dbReference type="NCBIfam" id="NF001940">
    <property type="entry name" value="PRK00720.1"/>
    <property type="match status" value="1"/>
</dbReference>
<dbReference type="NCBIfam" id="TIGR01411">
    <property type="entry name" value="tatAE"/>
    <property type="match status" value="1"/>
</dbReference>
<dbReference type="PANTHER" id="PTHR42982">
    <property type="entry name" value="SEC-INDEPENDENT PROTEIN TRANSLOCASE PROTEIN TATA"/>
    <property type="match status" value="1"/>
</dbReference>
<dbReference type="PANTHER" id="PTHR42982:SF1">
    <property type="entry name" value="SEC-INDEPENDENT PROTEIN TRANSLOCASE PROTEIN TATA"/>
    <property type="match status" value="1"/>
</dbReference>
<dbReference type="Pfam" id="PF02416">
    <property type="entry name" value="TatA_B_E"/>
    <property type="match status" value="1"/>
</dbReference>
<sequence length="96" mass="10512">MGFSSIWHWIIVLVVVLLLFGAGKIPRLMGDVAKGVKAFKKGMADDEDDEAASVSAERRGIEDGKPAQTIYPPQQPQQPQQPPQQPPVHRDDAPRG</sequence>
<name>TATA_RHORT</name>
<accession>Q2RTH2</accession>
<comment type="function">
    <text evidence="1">Part of the twin-arginine translocation (Tat) system that transports large folded proteins containing a characteristic twin-arginine motif in their signal peptide across membranes. TatA could form the protein-conducting channel of the Tat system.</text>
</comment>
<comment type="subunit">
    <text evidence="1">The Tat system comprises two distinct complexes: a TatABC complex, containing multiple copies of TatA, TatB and TatC subunits, and a separate TatA complex, containing only TatA subunits. Substrates initially bind to the TatABC complex, which probably triggers association of the separate TatA complex to form the active translocon.</text>
</comment>
<comment type="subcellular location">
    <subcellularLocation>
        <location evidence="1">Cell inner membrane</location>
        <topology evidence="1">Single-pass membrane protein</topology>
    </subcellularLocation>
</comment>
<comment type="similarity">
    <text evidence="1">Belongs to the TatA/E family.</text>
</comment>
<proteinExistence type="inferred from homology"/>
<feature type="chain" id="PRO_1000058965" description="Sec-independent protein translocase protein TatA">
    <location>
        <begin position="1"/>
        <end position="96"/>
    </location>
</feature>
<feature type="transmembrane region" description="Helical" evidence="1">
    <location>
        <begin position="1"/>
        <end position="21"/>
    </location>
</feature>
<feature type="region of interest" description="Disordered" evidence="2">
    <location>
        <begin position="42"/>
        <end position="96"/>
    </location>
</feature>
<feature type="compositionally biased region" description="Basic and acidic residues" evidence="2">
    <location>
        <begin position="56"/>
        <end position="65"/>
    </location>
</feature>
<feature type="compositionally biased region" description="Pro residues" evidence="2">
    <location>
        <begin position="73"/>
        <end position="86"/>
    </location>
</feature>
<evidence type="ECO:0000255" key="1">
    <source>
        <dbReference type="HAMAP-Rule" id="MF_00236"/>
    </source>
</evidence>
<evidence type="ECO:0000256" key="2">
    <source>
        <dbReference type="SAM" id="MobiDB-lite"/>
    </source>
</evidence>
<organism>
    <name type="scientific">Rhodospirillum rubrum (strain ATCC 11170 / ATH 1.1.1 / DSM 467 / LMG 4362 / NCIMB 8255 / S1)</name>
    <dbReference type="NCBI Taxonomy" id="269796"/>
    <lineage>
        <taxon>Bacteria</taxon>
        <taxon>Pseudomonadati</taxon>
        <taxon>Pseudomonadota</taxon>
        <taxon>Alphaproteobacteria</taxon>
        <taxon>Rhodospirillales</taxon>
        <taxon>Rhodospirillaceae</taxon>
        <taxon>Rhodospirillum</taxon>
    </lineage>
</organism>
<keyword id="KW-0997">Cell inner membrane</keyword>
<keyword id="KW-1003">Cell membrane</keyword>
<keyword id="KW-0472">Membrane</keyword>
<keyword id="KW-0653">Protein transport</keyword>
<keyword id="KW-1185">Reference proteome</keyword>
<keyword id="KW-0811">Translocation</keyword>
<keyword id="KW-0812">Transmembrane</keyword>
<keyword id="KW-1133">Transmembrane helix</keyword>
<keyword id="KW-0813">Transport</keyword>
<reference key="1">
    <citation type="journal article" date="2011" name="Stand. Genomic Sci.">
        <title>Complete genome sequence of Rhodospirillum rubrum type strain (S1).</title>
        <authorList>
            <person name="Munk A.C."/>
            <person name="Copeland A."/>
            <person name="Lucas S."/>
            <person name="Lapidus A."/>
            <person name="Del Rio T.G."/>
            <person name="Barry K."/>
            <person name="Detter J.C."/>
            <person name="Hammon N."/>
            <person name="Israni S."/>
            <person name="Pitluck S."/>
            <person name="Brettin T."/>
            <person name="Bruce D."/>
            <person name="Han C."/>
            <person name="Tapia R."/>
            <person name="Gilna P."/>
            <person name="Schmutz J."/>
            <person name="Larimer F."/>
            <person name="Land M."/>
            <person name="Kyrpides N.C."/>
            <person name="Mavromatis K."/>
            <person name="Richardson P."/>
            <person name="Rohde M."/>
            <person name="Goeker M."/>
            <person name="Klenk H.P."/>
            <person name="Zhang Y."/>
            <person name="Roberts G.P."/>
            <person name="Reslewic S."/>
            <person name="Schwartz D.C."/>
        </authorList>
    </citation>
    <scope>NUCLEOTIDE SEQUENCE [LARGE SCALE GENOMIC DNA]</scope>
    <source>
        <strain>ATCC 11170 / ATH 1.1.1 / DSM 467 / LMG 4362 / NCIMB 8255 / S1</strain>
    </source>
</reference>